<keyword id="KW-0067">ATP-binding</keyword>
<keyword id="KW-0997">Cell inner membrane</keyword>
<keyword id="KW-1003">Cell membrane</keyword>
<keyword id="KW-0472">Membrane</keyword>
<keyword id="KW-0547">Nucleotide-binding</keyword>
<keyword id="KW-1278">Translocase</keyword>
<keyword id="KW-0813">Transport</keyword>
<dbReference type="EC" id="7.6.2.14" evidence="1"/>
<dbReference type="EMBL" id="CP000086">
    <property type="protein sequence ID" value="ABC39266.1"/>
    <property type="molecule type" value="Genomic_DNA"/>
</dbReference>
<dbReference type="RefSeq" id="WP_009909606.1">
    <property type="nucleotide sequence ID" value="NZ_CP008785.1"/>
</dbReference>
<dbReference type="SMR" id="Q2SVN0"/>
<dbReference type="GeneID" id="45122210"/>
<dbReference type="KEGG" id="bte:BTH_I2499"/>
<dbReference type="HOGENOM" id="CLU_000604_1_22_4"/>
<dbReference type="Proteomes" id="UP000001930">
    <property type="component" value="Chromosome I"/>
</dbReference>
<dbReference type="GO" id="GO:0005886">
    <property type="term" value="C:plasma membrane"/>
    <property type="evidence" value="ECO:0007669"/>
    <property type="project" value="UniProtKB-SubCell"/>
</dbReference>
<dbReference type="GO" id="GO:0005524">
    <property type="term" value="F:ATP binding"/>
    <property type="evidence" value="ECO:0007669"/>
    <property type="project" value="UniProtKB-KW"/>
</dbReference>
<dbReference type="GO" id="GO:0016887">
    <property type="term" value="F:ATP hydrolysis activity"/>
    <property type="evidence" value="ECO:0007669"/>
    <property type="project" value="InterPro"/>
</dbReference>
<dbReference type="Gene3D" id="3.40.50.300">
    <property type="entry name" value="P-loop containing nucleotide triphosphate hydrolases"/>
    <property type="match status" value="1"/>
</dbReference>
<dbReference type="InterPro" id="IPR003593">
    <property type="entry name" value="AAA+_ATPase"/>
</dbReference>
<dbReference type="InterPro" id="IPR003439">
    <property type="entry name" value="ABC_transporter-like_ATP-bd"/>
</dbReference>
<dbReference type="InterPro" id="IPR017871">
    <property type="entry name" value="ABC_transporter-like_CS"/>
</dbReference>
<dbReference type="InterPro" id="IPR050166">
    <property type="entry name" value="ABC_transporter_ATP-bind"/>
</dbReference>
<dbReference type="InterPro" id="IPR027417">
    <property type="entry name" value="P-loop_NTPase"/>
</dbReference>
<dbReference type="PANTHER" id="PTHR42788:SF17">
    <property type="entry name" value="ALIPHATIC SULFONATES IMPORT ATP-BINDING PROTEIN SSUB"/>
    <property type="match status" value="1"/>
</dbReference>
<dbReference type="PANTHER" id="PTHR42788">
    <property type="entry name" value="TAURINE IMPORT ATP-BINDING PROTEIN-RELATED"/>
    <property type="match status" value="1"/>
</dbReference>
<dbReference type="Pfam" id="PF00005">
    <property type="entry name" value="ABC_tran"/>
    <property type="match status" value="1"/>
</dbReference>
<dbReference type="SMART" id="SM00382">
    <property type="entry name" value="AAA"/>
    <property type="match status" value="1"/>
</dbReference>
<dbReference type="SUPFAM" id="SSF52540">
    <property type="entry name" value="P-loop containing nucleoside triphosphate hydrolases"/>
    <property type="match status" value="1"/>
</dbReference>
<dbReference type="PROSITE" id="PS00211">
    <property type="entry name" value="ABC_TRANSPORTER_1"/>
    <property type="match status" value="1"/>
</dbReference>
<dbReference type="PROSITE" id="PS50893">
    <property type="entry name" value="ABC_TRANSPORTER_2"/>
    <property type="match status" value="1"/>
</dbReference>
<dbReference type="PROSITE" id="PS51291">
    <property type="entry name" value="SSUB"/>
    <property type="match status" value="1"/>
</dbReference>
<evidence type="ECO:0000255" key="1">
    <source>
        <dbReference type="HAMAP-Rule" id="MF_01724"/>
    </source>
</evidence>
<evidence type="ECO:0000256" key="2">
    <source>
        <dbReference type="SAM" id="MobiDB-lite"/>
    </source>
</evidence>
<accession>Q2SVN0</accession>
<name>SSUB_BURTA</name>
<gene>
    <name evidence="1" type="primary">ssuB</name>
    <name type="ordered locus">BTH_I2499</name>
</gene>
<protein>
    <recommendedName>
        <fullName evidence="1">Aliphatic sulfonates import ATP-binding protein SsuB</fullName>
        <ecNumber evidence="1">7.6.2.14</ecNumber>
    </recommendedName>
</protein>
<comment type="function">
    <text evidence="1">Part of the ABC transporter complex SsuABC involved in aliphatic sulfonates import. Responsible for energy coupling to the transport system.</text>
</comment>
<comment type="catalytic activity">
    <reaction evidence="1">
        <text>ATP + H2O + aliphatic sulfonate-[sulfonate-binding protein]Side 1 = ADP + phosphate + aliphatic sulfonateSide 2 + [sulfonate-binding protein]Side 1.</text>
        <dbReference type="EC" id="7.6.2.14"/>
    </reaction>
</comment>
<comment type="subunit">
    <text evidence="1">The complex is composed of two ATP-binding proteins (SsuB), two transmembrane proteins (SsuC) and a solute-binding protein (SsuA).</text>
</comment>
<comment type="subcellular location">
    <subcellularLocation>
        <location evidence="1">Cell inner membrane</location>
        <topology evidence="1">Peripheral membrane protein</topology>
    </subcellularLocation>
</comment>
<comment type="similarity">
    <text evidence="1">Belongs to the ABC transporter superfamily. Aliphatic sulfonates importer (TC 3.A.1.17.2) family.</text>
</comment>
<reference key="1">
    <citation type="journal article" date="2005" name="BMC Genomics">
        <title>Bacterial genome adaptation to niches: divergence of the potential virulence genes in three Burkholderia species of different survival strategies.</title>
        <authorList>
            <person name="Kim H.S."/>
            <person name="Schell M.A."/>
            <person name="Yu Y."/>
            <person name="Ulrich R.L."/>
            <person name="Sarria S.H."/>
            <person name="Nierman W.C."/>
            <person name="DeShazer D."/>
        </authorList>
    </citation>
    <scope>NUCLEOTIDE SEQUENCE [LARGE SCALE GENOMIC DNA]</scope>
    <source>
        <strain>ATCC 700388 / DSM 13276 / CCUG 48851 / CIP 106301 / E264</strain>
    </source>
</reference>
<sequence length="335" mass="35642">MTGTSLAATYGPIAGADLEAELAQPRTADGDAQDAAVLERDGGAHALPFASGGAFGRAPRDDDDDRRGAGDASVRLTRVSKRYGERTVLADVDLAIERGGFVSIVGRSGCGKSTLLRLVAELETPSAGTLVKRGDGGGVLDTRIMYQDARLLPWKTVLQNVMLGLGRRAKDDARAVLDEVGLLARAHDWPAQLSGGQRQRVALARALVHRPQLLLLDEPLGALDALTRIEMHELIERLWREHRFTALLVTHDVQEAVSLADRILLIEAGRIAFDQPVPLERPRARASAAFAELEDRVLQRVLTGSDPAGATSAAASAGGAARGRAAQANGLRWAV</sequence>
<feature type="chain" id="PRO_0000279905" description="Aliphatic sulfonates import ATP-binding protein SsuB">
    <location>
        <begin position="1"/>
        <end position="335"/>
    </location>
</feature>
<feature type="domain" description="ABC transporter" evidence="1">
    <location>
        <begin position="74"/>
        <end position="293"/>
    </location>
</feature>
<feature type="region of interest" description="Disordered" evidence="2">
    <location>
        <begin position="48"/>
        <end position="71"/>
    </location>
</feature>
<feature type="binding site" evidence="1">
    <location>
        <begin position="106"/>
        <end position="113"/>
    </location>
    <ligand>
        <name>ATP</name>
        <dbReference type="ChEBI" id="CHEBI:30616"/>
    </ligand>
</feature>
<organism>
    <name type="scientific">Burkholderia thailandensis (strain ATCC 700388 / DSM 13276 / CCUG 48851 / CIP 106301 / E264)</name>
    <dbReference type="NCBI Taxonomy" id="271848"/>
    <lineage>
        <taxon>Bacteria</taxon>
        <taxon>Pseudomonadati</taxon>
        <taxon>Pseudomonadota</taxon>
        <taxon>Betaproteobacteria</taxon>
        <taxon>Burkholderiales</taxon>
        <taxon>Burkholderiaceae</taxon>
        <taxon>Burkholderia</taxon>
        <taxon>pseudomallei group</taxon>
    </lineage>
</organism>
<proteinExistence type="inferred from homology"/>